<reference key="1">
    <citation type="submission" date="2006-12" db="EMBL/GenBank/DDBJ databases">
        <title>Complete sequence of chromosome 2 of Paracoccus denitrificans PD1222.</title>
        <authorList>
            <person name="Copeland A."/>
            <person name="Lucas S."/>
            <person name="Lapidus A."/>
            <person name="Barry K."/>
            <person name="Detter J.C."/>
            <person name="Glavina del Rio T."/>
            <person name="Hammon N."/>
            <person name="Israni S."/>
            <person name="Dalin E."/>
            <person name="Tice H."/>
            <person name="Pitluck S."/>
            <person name="Munk A.C."/>
            <person name="Brettin T."/>
            <person name="Bruce D."/>
            <person name="Han C."/>
            <person name="Tapia R."/>
            <person name="Gilna P."/>
            <person name="Schmutz J."/>
            <person name="Larimer F."/>
            <person name="Land M."/>
            <person name="Hauser L."/>
            <person name="Kyrpides N."/>
            <person name="Lykidis A."/>
            <person name="Spiro S."/>
            <person name="Richardson D.J."/>
            <person name="Moir J.W.B."/>
            <person name="Ferguson S.J."/>
            <person name="van Spanning R.J.M."/>
            <person name="Richardson P."/>
        </authorList>
    </citation>
    <scope>NUCLEOTIDE SEQUENCE [LARGE SCALE GENOMIC DNA]</scope>
    <source>
        <strain>Pd 1222</strain>
    </source>
</reference>
<accession>A1B840</accession>
<comment type="function">
    <text evidence="1">Endonuclease that specifically degrades the RNA of RNA-DNA hybrids.</text>
</comment>
<comment type="catalytic activity">
    <reaction evidence="1">
        <text>Endonucleolytic cleavage to 5'-phosphomonoester.</text>
        <dbReference type="EC" id="3.1.26.4"/>
    </reaction>
</comment>
<comment type="cofactor">
    <cofactor evidence="1">
        <name>Mg(2+)</name>
        <dbReference type="ChEBI" id="CHEBI:18420"/>
    </cofactor>
    <text evidence="1">Binds 1 Mg(2+) ion per subunit. May bind a second metal ion at a regulatory site, or after substrate binding.</text>
</comment>
<comment type="subunit">
    <text evidence="1">Monomer.</text>
</comment>
<comment type="subcellular location">
    <subcellularLocation>
        <location evidence="1">Cytoplasm</location>
    </subcellularLocation>
</comment>
<comment type="similarity">
    <text evidence="1">Belongs to the RNase H family.</text>
</comment>
<protein>
    <recommendedName>
        <fullName evidence="1">Ribonuclease H</fullName>
        <shortName evidence="1">RNase H</shortName>
        <ecNumber evidence="1">3.1.26.4</ecNumber>
    </recommendedName>
</protein>
<organism>
    <name type="scientific">Paracoccus denitrificans (strain Pd 1222)</name>
    <dbReference type="NCBI Taxonomy" id="318586"/>
    <lineage>
        <taxon>Bacteria</taxon>
        <taxon>Pseudomonadati</taxon>
        <taxon>Pseudomonadota</taxon>
        <taxon>Alphaproteobacteria</taxon>
        <taxon>Rhodobacterales</taxon>
        <taxon>Paracoccaceae</taxon>
        <taxon>Paracoccus</taxon>
    </lineage>
</organism>
<sequence length="155" mass="17153">MNALFAWTDGACSGNPGPGGWGVLMRAMDGDRMLKERELSGGEAETTNNRMELMAAISALEALTRPSEITVTTDSAYVKNGVTQWIHGWKKNGWRTADRKPVKNADLWQRLDAAQARHQVRWEWIKGHAGHPENERADELARAGMAPFKPARVSG</sequence>
<gene>
    <name evidence="1" type="primary">rnhA</name>
    <name type="ordered locus">Pden_3617</name>
</gene>
<proteinExistence type="inferred from homology"/>
<feature type="chain" id="PRO_0000332641" description="Ribonuclease H">
    <location>
        <begin position="1"/>
        <end position="155"/>
    </location>
</feature>
<feature type="domain" description="RNase H type-1" evidence="2">
    <location>
        <begin position="1"/>
        <end position="146"/>
    </location>
</feature>
<feature type="binding site" evidence="1">
    <location>
        <position position="9"/>
    </location>
    <ligand>
        <name>Mg(2+)</name>
        <dbReference type="ChEBI" id="CHEBI:18420"/>
        <label>1</label>
    </ligand>
</feature>
<feature type="binding site" evidence="1">
    <location>
        <position position="9"/>
    </location>
    <ligand>
        <name>Mg(2+)</name>
        <dbReference type="ChEBI" id="CHEBI:18420"/>
        <label>2</label>
    </ligand>
</feature>
<feature type="binding site" evidence="1">
    <location>
        <position position="52"/>
    </location>
    <ligand>
        <name>Mg(2+)</name>
        <dbReference type="ChEBI" id="CHEBI:18420"/>
        <label>1</label>
    </ligand>
</feature>
<feature type="binding site" evidence="1">
    <location>
        <position position="74"/>
    </location>
    <ligand>
        <name>Mg(2+)</name>
        <dbReference type="ChEBI" id="CHEBI:18420"/>
        <label>1</label>
    </ligand>
</feature>
<feature type="binding site" evidence="1">
    <location>
        <position position="138"/>
    </location>
    <ligand>
        <name>Mg(2+)</name>
        <dbReference type="ChEBI" id="CHEBI:18420"/>
        <label>2</label>
    </ligand>
</feature>
<name>RNH_PARDP</name>
<evidence type="ECO:0000255" key="1">
    <source>
        <dbReference type="HAMAP-Rule" id="MF_00042"/>
    </source>
</evidence>
<evidence type="ECO:0000255" key="2">
    <source>
        <dbReference type="PROSITE-ProRule" id="PRU00408"/>
    </source>
</evidence>
<dbReference type="EC" id="3.1.26.4" evidence="1"/>
<dbReference type="EMBL" id="CP000490">
    <property type="protein sequence ID" value="ABL71684.1"/>
    <property type="molecule type" value="Genomic_DNA"/>
</dbReference>
<dbReference type="RefSeq" id="WP_011749853.1">
    <property type="nucleotide sequence ID" value="NC_008687.1"/>
</dbReference>
<dbReference type="SMR" id="A1B840"/>
<dbReference type="STRING" id="318586.Pden_3617"/>
<dbReference type="EnsemblBacteria" id="ABL71684">
    <property type="protein sequence ID" value="ABL71684"/>
    <property type="gene ID" value="Pden_3617"/>
</dbReference>
<dbReference type="GeneID" id="93453271"/>
<dbReference type="KEGG" id="pde:Pden_3617"/>
<dbReference type="eggNOG" id="COG0328">
    <property type="taxonomic scope" value="Bacteria"/>
</dbReference>
<dbReference type="HOGENOM" id="CLU_030894_6_0_5"/>
<dbReference type="OrthoDB" id="7845843at2"/>
<dbReference type="Proteomes" id="UP000000361">
    <property type="component" value="Chromosome 2"/>
</dbReference>
<dbReference type="GO" id="GO:0005737">
    <property type="term" value="C:cytoplasm"/>
    <property type="evidence" value="ECO:0007669"/>
    <property type="project" value="UniProtKB-SubCell"/>
</dbReference>
<dbReference type="GO" id="GO:0000287">
    <property type="term" value="F:magnesium ion binding"/>
    <property type="evidence" value="ECO:0007669"/>
    <property type="project" value="UniProtKB-UniRule"/>
</dbReference>
<dbReference type="GO" id="GO:0003676">
    <property type="term" value="F:nucleic acid binding"/>
    <property type="evidence" value="ECO:0007669"/>
    <property type="project" value="InterPro"/>
</dbReference>
<dbReference type="GO" id="GO:0004523">
    <property type="term" value="F:RNA-DNA hybrid ribonuclease activity"/>
    <property type="evidence" value="ECO:0007669"/>
    <property type="project" value="UniProtKB-UniRule"/>
</dbReference>
<dbReference type="GO" id="GO:0043137">
    <property type="term" value="P:DNA replication, removal of RNA primer"/>
    <property type="evidence" value="ECO:0007669"/>
    <property type="project" value="TreeGrafter"/>
</dbReference>
<dbReference type="CDD" id="cd09278">
    <property type="entry name" value="RNase_HI_prokaryote_like"/>
    <property type="match status" value="1"/>
</dbReference>
<dbReference type="FunFam" id="3.30.420.10:FF:000089">
    <property type="entry name" value="Ribonuclease H"/>
    <property type="match status" value="1"/>
</dbReference>
<dbReference type="Gene3D" id="3.30.420.10">
    <property type="entry name" value="Ribonuclease H-like superfamily/Ribonuclease H"/>
    <property type="match status" value="1"/>
</dbReference>
<dbReference type="HAMAP" id="MF_00042">
    <property type="entry name" value="RNase_H"/>
    <property type="match status" value="1"/>
</dbReference>
<dbReference type="InterPro" id="IPR050092">
    <property type="entry name" value="RNase_H"/>
</dbReference>
<dbReference type="InterPro" id="IPR012337">
    <property type="entry name" value="RNaseH-like_sf"/>
</dbReference>
<dbReference type="InterPro" id="IPR002156">
    <property type="entry name" value="RNaseH_domain"/>
</dbReference>
<dbReference type="InterPro" id="IPR036397">
    <property type="entry name" value="RNaseH_sf"/>
</dbReference>
<dbReference type="InterPro" id="IPR022892">
    <property type="entry name" value="RNaseHI"/>
</dbReference>
<dbReference type="NCBIfam" id="NF001236">
    <property type="entry name" value="PRK00203.1"/>
    <property type="match status" value="1"/>
</dbReference>
<dbReference type="PANTHER" id="PTHR10642">
    <property type="entry name" value="RIBONUCLEASE H1"/>
    <property type="match status" value="1"/>
</dbReference>
<dbReference type="PANTHER" id="PTHR10642:SF26">
    <property type="entry name" value="RIBONUCLEASE H1"/>
    <property type="match status" value="1"/>
</dbReference>
<dbReference type="Pfam" id="PF00075">
    <property type="entry name" value="RNase_H"/>
    <property type="match status" value="1"/>
</dbReference>
<dbReference type="SUPFAM" id="SSF53098">
    <property type="entry name" value="Ribonuclease H-like"/>
    <property type="match status" value="1"/>
</dbReference>
<dbReference type="PROSITE" id="PS50879">
    <property type="entry name" value="RNASE_H_1"/>
    <property type="match status" value="1"/>
</dbReference>
<keyword id="KW-0963">Cytoplasm</keyword>
<keyword id="KW-0255">Endonuclease</keyword>
<keyword id="KW-0378">Hydrolase</keyword>
<keyword id="KW-0460">Magnesium</keyword>
<keyword id="KW-0479">Metal-binding</keyword>
<keyword id="KW-0540">Nuclease</keyword>
<keyword id="KW-1185">Reference proteome</keyword>